<feature type="signal peptide" evidence="9">
    <location>
        <begin position="1"/>
        <end position="24"/>
    </location>
</feature>
<feature type="propeptide" id="PRO_0000006212" evidence="7">
    <location>
        <begin position="25"/>
        <end position="153"/>
    </location>
</feature>
<feature type="peptide" id="PRO_0000006213" description="Corticoliberin">
    <location>
        <begin position="154"/>
        <end position="194"/>
    </location>
</feature>
<feature type="region of interest" description="Disordered" evidence="3">
    <location>
        <begin position="32"/>
        <end position="61"/>
    </location>
</feature>
<feature type="region of interest" description="Disordered" evidence="3">
    <location>
        <begin position="85"/>
        <end position="105"/>
    </location>
</feature>
<feature type="region of interest" description="Disordered" evidence="3">
    <location>
        <begin position="136"/>
        <end position="158"/>
    </location>
</feature>
<feature type="compositionally biased region" description="Low complexity" evidence="3">
    <location>
        <begin position="38"/>
        <end position="47"/>
    </location>
</feature>
<feature type="compositionally biased region" description="Low complexity" evidence="3">
    <location>
        <begin position="85"/>
        <end position="104"/>
    </location>
</feature>
<feature type="compositionally biased region" description="Basic and acidic residues" evidence="3">
    <location>
        <begin position="146"/>
        <end position="156"/>
    </location>
</feature>
<feature type="modified residue" description="Isoleucine amide" evidence="8">
    <location>
        <position position="194"/>
    </location>
</feature>
<feature type="sequence variant" id="VAR_075504" description="Found in patients with autosomal dominant nocturnal frontal lobe epilepsy; uncertain significance; results in decreased protein levels; decreased protein secretion; dbSNP:rs748404250." evidence="5">
    <original>P</original>
    <variation>R</variation>
    <location>
        <position position="30"/>
    </location>
</feature>
<feature type="mutagenesis site" description="Strongly reduced affinity for CRFR1." evidence="4">
    <original>Q</original>
    <variation>A</variation>
    <location>
        <position position="183"/>
    </location>
</feature>
<feature type="mutagenesis site" description="No effect on affinity for CRFR1." evidence="4">
    <original>N</original>
    <variation>A</variation>
    <location>
        <position position="187"/>
    </location>
</feature>
<feature type="mutagenesis site" description="Strongly reduced affinity for CRFR1." evidence="4">
    <original>R</original>
    <variation>A</variation>
    <location>
        <position position="188"/>
    </location>
</feature>
<feature type="mutagenesis site" description="Strongly reduced affinity for CRFR1." evidence="4">
    <original>L</original>
    <variation>A</variation>
    <location>
        <position position="190"/>
    </location>
</feature>
<feature type="mutagenesis site" description="Strongly reduced affinity for CRFR1." evidence="4">
    <original>M</original>
    <variation>A</variation>
    <location>
        <position position="191"/>
    </location>
</feature>
<feature type="mutagenesis site" description="No effect on affinity for CRFR1." evidence="4">
    <original>E</original>
    <variation>A</variation>
    <location>
        <position position="192"/>
    </location>
</feature>
<feature type="helix" evidence="11">
    <location>
        <begin position="160"/>
        <end position="162"/>
    </location>
</feature>
<feature type="helix" evidence="10">
    <location>
        <begin position="180"/>
        <end position="193"/>
    </location>
</feature>
<reference key="1">
    <citation type="journal article" date="1983" name="EMBO J.">
        <title>Isolation and sequence analysis of the human corticotropin-releasing factor precursor gene.</title>
        <authorList>
            <person name="Shibahara S."/>
            <person name="Morimoto Y."/>
            <person name="Furutani Y."/>
            <person name="Notake M."/>
            <person name="Takahashi H."/>
            <person name="Shimizu S."/>
            <person name="Horikawa S."/>
            <person name="Numa S."/>
        </authorList>
    </citation>
    <scope>NUCLEOTIDE SEQUENCE [GENOMIC DNA]</scope>
    <scope>AMIDATION AT ILE-194</scope>
</reference>
<reference key="2">
    <citation type="journal article" date="1989" name="Mol. Cell. Endocrinol.">
        <title>Preprocorticotropin releasing hormone: cDNA sequence and in vitro processing.</title>
        <authorList>
            <person name="Robinson B.G."/>
            <person name="D'Angio L.A. Jr."/>
            <person name="Pasieka K.B."/>
            <person name="Majzoub J.A."/>
        </authorList>
    </citation>
    <scope>NUCLEOTIDE SEQUENCE [MRNA]</scope>
    <scope>TISSUE SPECIFICITY</scope>
</reference>
<reference key="3">
    <citation type="submission" date="2003-05" db="EMBL/GenBank/DDBJ databases">
        <title>Cloning of human full-length CDSs in BD Creator(TM) system donor vector.</title>
        <authorList>
            <person name="Kalnine N."/>
            <person name="Chen X."/>
            <person name="Rolfs A."/>
            <person name="Halleck A."/>
            <person name="Hines L."/>
            <person name="Eisenstein S."/>
            <person name="Koundinya M."/>
            <person name="Raphael J."/>
            <person name="Moreira D."/>
            <person name="Kelley T."/>
            <person name="LaBaer J."/>
            <person name="Lin Y."/>
            <person name="Phelan M."/>
            <person name="Farmer A."/>
        </authorList>
    </citation>
    <scope>NUCLEOTIDE SEQUENCE [LARGE SCALE MRNA]</scope>
</reference>
<reference key="4">
    <citation type="journal article" date="2005" name="DNA Res.">
        <title>Signal sequence and keyword trap in silico for selection of full-length human cDNAs encoding secretion or membrane proteins from oligo-capped cDNA libraries.</title>
        <authorList>
            <person name="Otsuki T."/>
            <person name="Ota T."/>
            <person name="Nishikawa T."/>
            <person name="Hayashi K."/>
            <person name="Suzuki Y."/>
            <person name="Yamamoto J."/>
            <person name="Wakamatsu A."/>
            <person name="Kimura K."/>
            <person name="Sakamoto K."/>
            <person name="Hatano N."/>
            <person name="Kawai Y."/>
            <person name="Ishii S."/>
            <person name="Saito K."/>
            <person name="Kojima S."/>
            <person name="Sugiyama T."/>
            <person name="Ono T."/>
            <person name="Okano K."/>
            <person name="Yoshikawa Y."/>
            <person name="Aotsuka S."/>
            <person name="Sasaki N."/>
            <person name="Hattori A."/>
            <person name="Okumura K."/>
            <person name="Nagai K."/>
            <person name="Sugano S."/>
            <person name="Isogai T."/>
        </authorList>
    </citation>
    <scope>NUCLEOTIDE SEQUENCE [LARGE SCALE MRNA]</scope>
    <source>
        <tissue>Placenta</tissue>
    </source>
</reference>
<reference key="5">
    <citation type="submission" date="2005-07" db="EMBL/GenBank/DDBJ databases">
        <authorList>
            <person name="Mural R.J."/>
            <person name="Istrail S."/>
            <person name="Sutton G.G."/>
            <person name="Florea L."/>
            <person name="Halpern A.L."/>
            <person name="Mobarry C.M."/>
            <person name="Lippert R."/>
            <person name="Walenz B."/>
            <person name="Shatkay H."/>
            <person name="Dew I."/>
            <person name="Miller J.R."/>
            <person name="Flanigan M.J."/>
            <person name="Edwards N.J."/>
            <person name="Bolanos R."/>
            <person name="Fasulo D."/>
            <person name="Halldorsson B.V."/>
            <person name="Hannenhalli S."/>
            <person name="Turner R."/>
            <person name="Yooseph S."/>
            <person name="Lu F."/>
            <person name="Nusskern D.R."/>
            <person name="Shue B.C."/>
            <person name="Zheng X.H."/>
            <person name="Zhong F."/>
            <person name="Delcher A.L."/>
            <person name="Huson D.H."/>
            <person name="Kravitz S.A."/>
            <person name="Mouchard L."/>
            <person name="Reinert K."/>
            <person name="Remington K.A."/>
            <person name="Clark A.G."/>
            <person name="Waterman M.S."/>
            <person name="Eichler E.E."/>
            <person name="Adams M.D."/>
            <person name="Hunkapiller M.W."/>
            <person name="Myers E.W."/>
            <person name="Venter J.C."/>
        </authorList>
    </citation>
    <scope>NUCLEOTIDE SEQUENCE [LARGE SCALE GENOMIC DNA]</scope>
</reference>
<reference key="6">
    <citation type="journal article" date="2004" name="Genome Res.">
        <title>The status, quality, and expansion of the NIH full-length cDNA project: the Mammalian Gene Collection (MGC).</title>
        <authorList>
            <consortium name="The MGC Project Team"/>
        </authorList>
    </citation>
    <scope>NUCLEOTIDE SEQUENCE [LARGE SCALE MRNA]</scope>
    <source>
        <tissue>Brain</tissue>
    </source>
</reference>
<reference key="7">
    <citation type="journal article" date="1988" name="J. Clin. Endocrinol. Metab.">
        <title>Isolation and characterization of a corticotropin-releasing hormone-like peptide from human placenta.</title>
        <authorList>
            <person name="Sasaki A."/>
            <person name="Tempst P."/>
            <person name="Liotta A.S."/>
            <person name="Margioris A.N."/>
            <person name="Hood L.E."/>
            <person name="Kent S.B."/>
            <person name="Sato S."/>
            <person name="Shinkawa O."/>
            <person name="Yoshinaga K."/>
            <person name="Krieger D.T."/>
        </authorList>
    </citation>
    <scope>PROTEIN SEQUENCE OF 154-186</scope>
    <scope>TISSUE SPECIFICITY</scope>
</reference>
<reference key="8">
    <citation type="journal article" date="1993" name="Protein Eng.">
        <title>Solution structure of human corticotropin releasing factor by 1H NMR and distance geometry with restrained molecular dynamics.</title>
        <authorList>
            <person name="Romier C."/>
            <person name="Bernassau J.-M."/>
            <person name="Cambillau C."/>
            <person name="Darbon H."/>
        </authorList>
    </citation>
    <scope>STRUCTURE BY NMR OF 154-194</scope>
</reference>
<reference key="9">
    <citation type="journal article" date="2008" name="J. Biol. Chem.">
        <title>Molecular recognition of corticotropin-releasing factor by its G-protein-coupled receptor CRFR1.</title>
        <authorList>
            <person name="Pioszak A.A."/>
            <person name="Parker N.R."/>
            <person name="Suino-Powell K."/>
            <person name="Xu H.E."/>
        </authorList>
    </citation>
    <scope>X-RAY CRYSTALLOGRAPHY (1.96 ANGSTROMS) OF 175-194 IN COMPLEX WITH CRFR1</scope>
    <scope>SUBUNIT</scope>
    <scope>MUTAGENESIS OF GLN-183; ASN-187; ARG-188; LEU-190; MET-191 AND GLU-192</scope>
</reference>
<reference key="10">
    <citation type="journal article" date="2013" name="PLoS ONE">
        <title>Functional characterization of a CRH missense mutation identified in an ADNFLE family.</title>
        <authorList>
            <person name="Sansoni V."/>
            <person name="Forcella M."/>
            <person name="Mozzi A."/>
            <person name="Fusi P."/>
            <person name="Ambrosini R."/>
            <person name="Ferini-Strambi L."/>
            <person name="Combi R."/>
        </authorList>
    </citation>
    <scope>VARIANT ARG-30</scope>
    <scope>CHARACTERIZATION OF VARIANT ARG-30</scope>
</reference>
<proteinExistence type="evidence at protein level"/>
<organism>
    <name type="scientific">Homo sapiens</name>
    <name type="common">Human</name>
    <dbReference type="NCBI Taxonomy" id="9606"/>
    <lineage>
        <taxon>Eukaryota</taxon>
        <taxon>Metazoa</taxon>
        <taxon>Chordata</taxon>
        <taxon>Craniata</taxon>
        <taxon>Vertebrata</taxon>
        <taxon>Euteleostomi</taxon>
        <taxon>Mammalia</taxon>
        <taxon>Eutheria</taxon>
        <taxon>Euarchontoglires</taxon>
        <taxon>Primates</taxon>
        <taxon>Haplorrhini</taxon>
        <taxon>Catarrhini</taxon>
        <taxon>Hominidae</taxon>
        <taxon>Homo</taxon>
    </lineage>
</organism>
<sequence>MRLPLLVSAGVLLVALLPCPPCRALLSRGPVPGARQAPQHPQPLDFFQPPPQSEQPQQPQARPVLLRMGEEYFLRLGNLNKSPAAPLSPASSLLAGGSGSRPSPEQATANFFRVLLQQLLLPRRSLDSPAALAERGARNALGGHQEAPERERRSEEPPISLDLTFHLLREVLEMARAEQLAQQAHSNRKLMEIIGK</sequence>
<gene>
    <name type="primary">CRH</name>
</gene>
<dbReference type="EMBL" id="V00571">
    <property type="protein sequence ID" value="CAA23834.1"/>
    <property type="molecule type" value="Genomic_DNA"/>
</dbReference>
<dbReference type="EMBL" id="BT007453">
    <property type="protein sequence ID" value="AAP36121.1"/>
    <property type="molecule type" value="mRNA"/>
</dbReference>
<dbReference type="EMBL" id="AK075431">
    <property type="protein sequence ID" value="BAG52136.1"/>
    <property type="molecule type" value="mRNA"/>
</dbReference>
<dbReference type="EMBL" id="CH471068">
    <property type="protein sequence ID" value="EAW86897.1"/>
    <property type="molecule type" value="Genomic_DNA"/>
</dbReference>
<dbReference type="EMBL" id="BC002599">
    <property type="protein sequence ID" value="AAH02599.1"/>
    <property type="molecule type" value="mRNA"/>
</dbReference>
<dbReference type="EMBL" id="BC011031">
    <property type="protein sequence ID" value="AAH11031.1"/>
    <property type="molecule type" value="mRNA"/>
</dbReference>
<dbReference type="CCDS" id="CCDS6188.1"/>
<dbReference type="PIR" id="A30327">
    <property type="entry name" value="A30327"/>
</dbReference>
<dbReference type="RefSeq" id="NP_000747.1">
    <property type="nucleotide sequence ID" value="NM_000756.4"/>
</dbReference>
<dbReference type="RefSeq" id="XP_016868579.1">
    <property type="nucleotide sequence ID" value="XM_017013090.1"/>
</dbReference>
<dbReference type="RefSeq" id="XP_016868580.1">
    <property type="nucleotide sequence ID" value="XM_017013091.1"/>
</dbReference>
<dbReference type="RefSeq" id="XP_016868581.1">
    <property type="nucleotide sequence ID" value="XM_017013092.1"/>
</dbReference>
<dbReference type="RefSeq" id="XP_016868582.1">
    <property type="nucleotide sequence ID" value="XM_017013093.1"/>
</dbReference>
<dbReference type="RefSeq" id="XP_054215776.1">
    <property type="nucleotide sequence ID" value="XM_054359801.1"/>
</dbReference>
<dbReference type="RefSeq" id="XP_054215777.1">
    <property type="nucleotide sequence ID" value="XM_054359802.1"/>
</dbReference>
<dbReference type="RefSeq" id="XP_054215778.1">
    <property type="nucleotide sequence ID" value="XM_054359803.1"/>
</dbReference>
<dbReference type="PDB" id="1GO9">
    <property type="method" value="NMR"/>
    <property type="chains" value="A=154-194"/>
</dbReference>
<dbReference type="PDB" id="1GOE">
    <property type="method" value="NMR"/>
    <property type="chains" value="A=154-194"/>
</dbReference>
<dbReference type="PDB" id="3EHT">
    <property type="method" value="X-ray"/>
    <property type="resolution" value="3.40 A"/>
    <property type="chains" value="B=180-194"/>
</dbReference>
<dbReference type="PDB" id="3EHU">
    <property type="method" value="X-ray"/>
    <property type="resolution" value="1.96 A"/>
    <property type="chains" value="C/D=175-194"/>
</dbReference>
<dbReference type="PDB" id="6P9X">
    <property type="method" value="EM"/>
    <property type="resolution" value="2.91 A"/>
    <property type="chains" value="P=154-194"/>
</dbReference>
<dbReference type="PDBsum" id="1GO9"/>
<dbReference type="PDBsum" id="1GOE"/>
<dbReference type="PDBsum" id="3EHT"/>
<dbReference type="PDBsum" id="3EHU"/>
<dbReference type="PDBsum" id="6P9X"/>
<dbReference type="EMDB" id="EMD-20277"/>
<dbReference type="SMR" id="P06850"/>
<dbReference type="BioGRID" id="107782">
    <property type="interactions" value="25"/>
</dbReference>
<dbReference type="FunCoup" id="P06850">
    <property type="interactions" value="697"/>
</dbReference>
<dbReference type="IntAct" id="P06850">
    <property type="interactions" value="24"/>
</dbReference>
<dbReference type="STRING" id="9606.ENSP00000276571"/>
<dbReference type="BindingDB" id="P06850"/>
<dbReference type="ChEMBL" id="CHEMBL5291554"/>
<dbReference type="DrugBank" id="DB02952">
    <property type="generic name" value="2-aminoisobutyric acid"/>
</dbReference>
<dbReference type="DrugBank" id="DB01285">
    <property type="generic name" value="Corticotropin"/>
</dbReference>
<dbReference type="DrugBank" id="DB02556">
    <property type="generic name" value="D-Phenylalanine"/>
</dbReference>
<dbReference type="iPTMnet" id="P06850"/>
<dbReference type="PhosphoSitePlus" id="P06850"/>
<dbReference type="BioMuta" id="CRH"/>
<dbReference type="DMDM" id="117445"/>
<dbReference type="MassIVE" id="P06850"/>
<dbReference type="PaxDb" id="9606-ENSP00000276571"/>
<dbReference type="PeptideAtlas" id="P06850"/>
<dbReference type="ProteomicsDB" id="51935"/>
<dbReference type="TopDownProteomics" id="P06850"/>
<dbReference type="Antibodypedia" id="11984">
    <property type="antibodies" value="539 antibodies from 40 providers"/>
</dbReference>
<dbReference type="DNASU" id="1392"/>
<dbReference type="Ensembl" id="ENST00000276571.5">
    <property type="protein sequence ID" value="ENSP00000276571.3"/>
    <property type="gene ID" value="ENSG00000147571.5"/>
</dbReference>
<dbReference type="GeneID" id="1392"/>
<dbReference type="KEGG" id="hsa:1392"/>
<dbReference type="MANE-Select" id="ENST00000276571.5">
    <property type="protein sequence ID" value="ENSP00000276571.3"/>
    <property type="RefSeq nucleotide sequence ID" value="NM_000756.4"/>
    <property type="RefSeq protein sequence ID" value="NP_000747.1"/>
</dbReference>
<dbReference type="UCSC" id="uc003xvy.3">
    <property type="organism name" value="human"/>
</dbReference>
<dbReference type="AGR" id="HGNC:2355"/>
<dbReference type="CTD" id="1392"/>
<dbReference type="DisGeNET" id="1392"/>
<dbReference type="GeneCards" id="CRH"/>
<dbReference type="GeneReviews" id="CRH"/>
<dbReference type="HGNC" id="HGNC:2355">
    <property type="gene designation" value="CRH"/>
</dbReference>
<dbReference type="HPA" id="ENSG00000147571">
    <property type="expression patterns" value="Tissue enriched (brain)"/>
</dbReference>
<dbReference type="MalaCards" id="CRH"/>
<dbReference type="MIM" id="122560">
    <property type="type" value="gene+phenotype"/>
</dbReference>
<dbReference type="neXtProt" id="NX_P06850"/>
<dbReference type="OpenTargets" id="ENSG00000147571"/>
<dbReference type="Orphanet" id="98784">
    <property type="disease" value="Sleep-related hypermotor epilepsy"/>
</dbReference>
<dbReference type="PharmGKB" id="PA119"/>
<dbReference type="VEuPathDB" id="HostDB:ENSG00000147571"/>
<dbReference type="eggNOG" id="ENOG502S25G">
    <property type="taxonomic scope" value="Eukaryota"/>
</dbReference>
<dbReference type="GeneTree" id="ENSGT00940000154473"/>
<dbReference type="HOGENOM" id="CLU_136288_0_0_1"/>
<dbReference type="InParanoid" id="P06850"/>
<dbReference type="OMA" id="QHFQERS"/>
<dbReference type="OrthoDB" id="9837731at2759"/>
<dbReference type="PAN-GO" id="P06850">
    <property type="GO annotations" value="5 GO annotations based on evolutionary models"/>
</dbReference>
<dbReference type="PhylomeDB" id="P06850"/>
<dbReference type="TreeFam" id="TF332956"/>
<dbReference type="PathwayCommons" id="P06850"/>
<dbReference type="Reactome" id="R-HSA-373080">
    <property type="pathway name" value="Class B/2 (Secretin family receptors)"/>
</dbReference>
<dbReference type="Reactome" id="R-HSA-418555">
    <property type="pathway name" value="G alpha (s) signalling events"/>
</dbReference>
<dbReference type="Reactome" id="R-HSA-9022702">
    <property type="pathway name" value="MECP2 regulates transcription of neuronal ligands"/>
</dbReference>
<dbReference type="SignaLink" id="P06850"/>
<dbReference type="SIGNOR" id="P06850"/>
<dbReference type="BioGRID-ORCS" id="1392">
    <property type="hits" value="21 hits in 1148 CRISPR screens"/>
</dbReference>
<dbReference type="EvolutionaryTrace" id="P06850"/>
<dbReference type="GeneWiki" id="Corticotropin-releasing_hormone"/>
<dbReference type="GenomeRNAi" id="1392"/>
<dbReference type="Pharos" id="P06850">
    <property type="development level" value="Tbio"/>
</dbReference>
<dbReference type="PRO" id="PR:P06850"/>
<dbReference type="Proteomes" id="UP000005640">
    <property type="component" value="Chromosome 8"/>
</dbReference>
<dbReference type="RNAct" id="P06850">
    <property type="molecule type" value="protein"/>
</dbReference>
<dbReference type="Bgee" id="ENSG00000147571">
    <property type="expression patterns" value="Expressed in lateral nuclear group of thalamus and 74 other cell types or tissues"/>
</dbReference>
<dbReference type="ExpressionAtlas" id="P06850">
    <property type="expression patterns" value="baseline and differential"/>
</dbReference>
<dbReference type="GO" id="GO:0005576">
    <property type="term" value="C:extracellular region"/>
    <property type="evidence" value="ECO:0000304"/>
    <property type="project" value="Reactome"/>
</dbReference>
<dbReference type="GO" id="GO:0005615">
    <property type="term" value="C:extracellular space"/>
    <property type="evidence" value="ECO:0000314"/>
    <property type="project" value="UniProtKB"/>
</dbReference>
<dbReference type="GO" id="GO:0099013">
    <property type="term" value="C:neuronal dense core vesicle lumen"/>
    <property type="evidence" value="ECO:0007669"/>
    <property type="project" value="Ensembl"/>
</dbReference>
<dbReference type="GO" id="GO:0043204">
    <property type="term" value="C:perikaryon"/>
    <property type="evidence" value="ECO:0007669"/>
    <property type="project" value="Ensembl"/>
</dbReference>
<dbReference type="GO" id="GO:0045202">
    <property type="term" value="C:synapse"/>
    <property type="evidence" value="ECO:0007669"/>
    <property type="project" value="GOC"/>
</dbReference>
<dbReference type="GO" id="GO:0043196">
    <property type="term" value="C:varicosity"/>
    <property type="evidence" value="ECO:0007669"/>
    <property type="project" value="Ensembl"/>
</dbReference>
<dbReference type="GO" id="GO:0017045">
    <property type="term" value="F:corticotropin-releasing hormone activity"/>
    <property type="evidence" value="ECO:0000318"/>
    <property type="project" value="GO_Central"/>
</dbReference>
<dbReference type="GO" id="GO:0051430">
    <property type="term" value="F:corticotropin-releasing hormone receptor 1 binding"/>
    <property type="evidence" value="ECO:0007669"/>
    <property type="project" value="Ensembl"/>
</dbReference>
<dbReference type="GO" id="GO:0051431">
    <property type="term" value="F:corticotropin-releasing hormone receptor 2 binding"/>
    <property type="evidence" value="ECO:0007669"/>
    <property type="project" value="Ensembl"/>
</dbReference>
<dbReference type="GO" id="GO:0005179">
    <property type="term" value="F:hormone activity"/>
    <property type="evidence" value="ECO:0000304"/>
    <property type="project" value="ProtInc"/>
</dbReference>
<dbReference type="GO" id="GO:0005184">
    <property type="term" value="F:neuropeptide hormone activity"/>
    <property type="evidence" value="ECO:0000304"/>
    <property type="project" value="ProtInc"/>
</dbReference>
<dbReference type="GO" id="GO:0005102">
    <property type="term" value="F:signaling receptor binding"/>
    <property type="evidence" value="ECO:0000304"/>
    <property type="project" value="ProtInc"/>
</dbReference>
<dbReference type="GO" id="GO:0030325">
    <property type="term" value="P:adrenal gland development"/>
    <property type="evidence" value="ECO:0007669"/>
    <property type="project" value="Ensembl"/>
</dbReference>
<dbReference type="GO" id="GO:0008306">
    <property type="term" value="P:associative learning"/>
    <property type="evidence" value="ECO:0007669"/>
    <property type="project" value="Ensembl"/>
</dbReference>
<dbReference type="GO" id="GO:0071314">
    <property type="term" value="P:cellular response to cocaine"/>
    <property type="evidence" value="ECO:0007669"/>
    <property type="project" value="Ensembl"/>
</dbReference>
<dbReference type="GO" id="GO:0071549">
    <property type="term" value="P:cellular response to dexamethasone stimulus"/>
    <property type="evidence" value="ECO:0007669"/>
    <property type="project" value="Ensembl"/>
</dbReference>
<dbReference type="GO" id="GO:0007268">
    <property type="term" value="P:chemical synaptic transmission"/>
    <property type="evidence" value="ECO:0000304"/>
    <property type="project" value="ProtInc"/>
</dbReference>
<dbReference type="GO" id="GO:0016101">
    <property type="term" value="P:diterpenoid metabolic process"/>
    <property type="evidence" value="ECO:0007669"/>
    <property type="project" value="Ensembl"/>
</dbReference>
<dbReference type="GO" id="GO:0007565">
    <property type="term" value="P:female pregnancy"/>
    <property type="evidence" value="ECO:0000314"/>
    <property type="project" value="UniProtKB"/>
</dbReference>
<dbReference type="GO" id="GO:0006704">
    <property type="term" value="P:glucocorticoid biosynthetic process"/>
    <property type="evidence" value="ECO:0007669"/>
    <property type="project" value="Ensembl"/>
</dbReference>
<dbReference type="GO" id="GO:0008628">
    <property type="term" value="P:hormone-mediated apoptotic signaling pathway"/>
    <property type="evidence" value="ECO:0007669"/>
    <property type="project" value="Ensembl"/>
</dbReference>
<dbReference type="GO" id="GO:0021854">
    <property type="term" value="P:hypothalamus development"/>
    <property type="evidence" value="ECO:0007669"/>
    <property type="project" value="Ensembl"/>
</dbReference>
<dbReference type="GO" id="GO:0006954">
    <property type="term" value="P:inflammatory response"/>
    <property type="evidence" value="ECO:0000314"/>
    <property type="project" value="UniProtKB"/>
</dbReference>
<dbReference type="GO" id="GO:0007611">
    <property type="term" value="P:learning or memory"/>
    <property type="evidence" value="ECO:0000304"/>
    <property type="project" value="ProtInc"/>
</dbReference>
<dbReference type="GO" id="GO:0035641">
    <property type="term" value="P:locomotory exploration behavior"/>
    <property type="evidence" value="ECO:0007669"/>
    <property type="project" value="Ensembl"/>
</dbReference>
<dbReference type="GO" id="GO:0060291">
    <property type="term" value="P:long-term synaptic potentiation"/>
    <property type="evidence" value="ECO:0007669"/>
    <property type="project" value="Ensembl"/>
</dbReference>
<dbReference type="GO" id="GO:0030324">
    <property type="term" value="P:lung development"/>
    <property type="evidence" value="ECO:0007669"/>
    <property type="project" value="Ensembl"/>
</dbReference>
<dbReference type="GO" id="GO:0050801">
    <property type="term" value="P:monoatomic ion homeostasis"/>
    <property type="evidence" value="ECO:0007669"/>
    <property type="project" value="Ensembl"/>
</dbReference>
<dbReference type="GO" id="GO:0042322">
    <property type="term" value="P:negative regulation of circadian sleep/wake cycle, REM sleep"/>
    <property type="evidence" value="ECO:0000303"/>
    <property type="project" value="BHF-UCL"/>
</dbReference>
<dbReference type="GO" id="GO:0032811">
    <property type="term" value="P:negative regulation of epinephrine secretion"/>
    <property type="evidence" value="ECO:0000318"/>
    <property type="project" value="GO_Central"/>
</dbReference>
<dbReference type="GO" id="GO:0010629">
    <property type="term" value="P:negative regulation of gene expression"/>
    <property type="evidence" value="ECO:0007669"/>
    <property type="project" value="Ensembl"/>
</dbReference>
<dbReference type="GO" id="GO:0070093">
    <property type="term" value="P:negative regulation of glucagon secretion"/>
    <property type="evidence" value="ECO:0000318"/>
    <property type="project" value="GO_Central"/>
</dbReference>
<dbReference type="GO" id="GO:0033685">
    <property type="term" value="P:negative regulation of luteinizing hormone secretion"/>
    <property type="evidence" value="ECO:0007669"/>
    <property type="project" value="Ensembl"/>
</dbReference>
<dbReference type="GO" id="GO:0010700">
    <property type="term" value="P:negative regulation of norepinephrine secretion"/>
    <property type="evidence" value="ECO:0007669"/>
    <property type="project" value="Ensembl"/>
</dbReference>
<dbReference type="GO" id="GO:0003085">
    <property type="term" value="P:negative regulation of systemic arterial blood pressure"/>
    <property type="evidence" value="ECO:0007669"/>
    <property type="project" value="Ensembl"/>
</dbReference>
<dbReference type="GO" id="GO:0051402">
    <property type="term" value="P:neuron apoptotic process"/>
    <property type="evidence" value="ECO:0007669"/>
    <property type="project" value="Ensembl"/>
</dbReference>
<dbReference type="GO" id="GO:0007567">
    <property type="term" value="P:parturition"/>
    <property type="evidence" value="ECO:0000304"/>
    <property type="project" value="ProtInc"/>
</dbReference>
<dbReference type="GO" id="GO:2000987">
    <property type="term" value="P:positive regulation of behavioral fear response"/>
    <property type="evidence" value="ECO:0007669"/>
    <property type="project" value="Ensembl"/>
</dbReference>
<dbReference type="GO" id="GO:0090280">
    <property type="term" value="P:positive regulation of calcium ion import"/>
    <property type="evidence" value="ECO:0007669"/>
    <property type="project" value="Ensembl"/>
</dbReference>
<dbReference type="GO" id="GO:0141163">
    <property type="term" value="P:positive regulation of cAMP/PKA signal transduction"/>
    <property type="evidence" value="ECO:0007669"/>
    <property type="project" value="Ensembl"/>
</dbReference>
<dbReference type="GO" id="GO:0008284">
    <property type="term" value="P:positive regulation of cell population proliferation"/>
    <property type="evidence" value="ECO:0007669"/>
    <property type="project" value="Ensembl"/>
</dbReference>
<dbReference type="GO" id="GO:0010841">
    <property type="term" value="P:positive regulation of circadian sleep/wake cycle, wakefulness"/>
    <property type="evidence" value="ECO:0000303"/>
    <property type="project" value="BHF-UCL"/>
</dbReference>
<dbReference type="GO" id="GO:2000854">
    <property type="term" value="P:positive regulation of corticosterone secretion"/>
    <property type="evidence" value="ECO:0007669"/>
    <property type="project" value="Ensembl"/>
</dbReference>
<dbReference type="GO" id="GO:0051461">
    <property type="term" value="P:positive regulation of corticotropin secretion"/>
    <property type="evidence" value="ECO:0000314"/>
    <property type="project" value="UniProtKB"/>
</dbReference>
<dbReference type="GO" id="GO:0051464">
    <property type="term" value="P:positive regulation of cortisol secretion"/>
    <property type="evidence" value="ECO:0000314"/>
    <property type="project" value="BHF-UCL"/>
</dbReference>
<dbReference type="GO" id="GO:0060456">
    <property type="term" value="P:positive regulation of digestive system process"/>
    <property type="evidence" value="ECO:0007669"/>
    <property type="project" value="Ensembl"/>
</dbReference>
<dbReference type="GO" id="GO:0010628">
    <property type="term" value="P:positive regulation of gene expression"/>
    <property type="evidence" value="ECO:0007669"/>
    <property type="project" value="Ensembl"/>
</dbReference>
<dbReference type="GO" id="GO:0035774">
    <property type="term" value="P:positive regulation of insulin secretion involved in cellular response to glucose stimulus"/>
    <property type="evidence" value="ECO:0007669"/>
    <property type="project" value="Ensembl"/>
</dbReference>
<dbReference type="GO" id="GO:2000310">
    <property type="term" value="P:regulation of NMDA receptor activity"/>
    <property type="evidence" value="ECO:0000314"/>
    <property type="project" value="UniProtKB"/>
</dbReference>
<dbReference type="GO" id="GO:0014062">
    <property type="term" value="P:regulation of serotonin secretion"/>
    <property type="evidence" value="ECO:0007669"/>
    <property type="project" value="Ensembl"/>
</dbReference>
<dbReference type="GO" id="GO:1904044">
    <property type="term" value="P:response to aldosterone"/>
    <property type="evidence" value="ECO:0007669"/>
    <property type="project" value="Ensembl"/>
</dbReference>
<dbReference type="GO" id="GO:0051412">
    <property type="term" value="P:response to corticosterone"/>
    <property type="evidence" value="ECO:0007669"/>
    <property type="project" value="Ensembl"/>
</dbReference>
<dbReference type="GO" id="GO:0043627">
    <property type="term" value="P:response to estrogen"/>
    <property type="evidence" value="ECO:0007669"/>
    <property type="project" value="Ensembl"/>
</dbReference>
<dbReference type="GO" id="GO:0045471">
    <property type="term" value="P:response to ethanol"/>
    <property type="evidence" value="ECO:0007669"/>
    <property type="project" value="Ensembl"/>
</dbReference>
<dbReference type="GO" id="GO:0045472">
    <property type="term" value="P:response to ether"/>
    <property type="evidence" value="ECO:0007669"/>
    <property type="project" value="Ensembl"/>
</dbReference>
<dbReference type="GO" id="GO:0035902">
    <property type="term" value="P:response to immobilization stress"/>
    <property type="evidence" value="ECO:0007669"/>
    <property type="project" value="Ensembl"/>
</dbReference>
<dbReference type="GO" id="GO:0048265">
    <property type="term" value="P:response to pain"/>
    <property type="evidence" value="ECO:0007669"/>
    <property type="project" value="Ensembl"/>
</dbReference>
<dbReference type="GO" id="GO:0009410">
    <property type="term" value="P:response to xenobiotic stimulus"/>
    <property type="evidence" value="ECO:0007669"/>
    <property type="project" value="Ensembl"/>
</dbReference>
<dbReference type="GO" id="GO:0007165">
    <property type="term" value="P:signal transduction"/>
    <property type="evidence" value="ECO:0000304"/>
    <property type="project" value="ProtInc"/>
</dbReference>
<dbReference type="GO" id="GO:0001963">
    <property type="term" value="P:synaptic transmission, dopaminergic"/>
    <property type="evidence" value="ECO:0000314"/>
    <property type="project" value="UniProtKB"/>
</dbReference>
<dbReference type="Gene3D" id="6.10.250.1920">
    <property type="match status" value="1"/>
</dbReference>
<dbReference type="InterPro" id="IPR018446">
    <property type="entry name" value="Corticotropin-releasing_fac_CS"/>
</dbReference>
<dbReference type="InterPro" id="IPR000187">
    <property type="entry name" value="CRF"/>
</dbReference>
<dbReference type="InterPro" id="IPR003620">
    <property type="entry name" value="Urocortin_CRF"/>
</dbReference>
<dbReference type="PANTHER" id="PTHR15035:SF9">
    <property type="entry name" value="CORTICOLIBERIN"/>
    <property type="match status" value="1"/>
</dbReference>
<dbReference type="PANTHER" id="PTHR15035">
    <property type="entry name" value="CORTICOLIBERIN/UROCORTIN"/>
    <property type="match status" value="1"/>
</dbReference>
<dbReference type="Pfam" id="PF00473">
    <property type="entry name" value="CRF"/>
    <property type="match status" value="1"/>
</dbReference>
<dbReference type="PRINTS" id="PR01612">
    <property type="entry name" value="CRFFAMILY"/>
</dbReference>
<dbReference type="SMART" id="SM00039">
    <property type="entry name" value="CRF"/>
    <property type="match status" value="1"/>
</dbReference>
<dbReference type="PROSITE" id="PS00511">
    <property type="entry name" value="CRF"/>
    <property type="match status" value="1"/>
</dbReference>
<comment type="function">
    <text evidence="1 2">Hormone regulating the release of corticotropin from pituitary gland (By similarity). Induces NLRP6 in intestinal epithelial cells, hence may influence gut microbiota profile (By similarity).</text>
</comment>
<comment type="subunit">
    <text evidence="4">Interacts (via C-terminus) with CRFR1 (via N-terminal extracellular domain).</text>
</comment>
<comment type="interaction">
    <interactant intactId="EBI-3870390">
        <id>P06850</id>
    </interactant>
    <interactant intactId="EBI-3870393">
        <id>P34998</id>
        <label>CRHR1</label>
    </interactant>
    <organismsDiffer>false</organismsDiffer>
    <experiments>5</experiments>
</comment>
<comment type="interaction">
    <interactant intactId="EBI-3870390">
        <id>P06850</id>
    </interactant>
    <interactant intactId="EBI-26585317">
        <id>Q13324-1</id>
        <label>CRHR2</label>
    </interactant>
    <organismsDiffer>false</organismsDiffer>
    <experiments>4</experiments>
</comment>
<comment type="interaction">
    <interactant intactId="EBI-3870390">
        <id>P06850</id>
    </interactant>
    <interactant intactId="EBI-9087876">
        <id>P48730-2</id>
        <label>CSNK1D</label>
    </interactant>
    <organismsDiffer>false</organismsDiffer>
    <experiments>3</experiments>
</comment>
<comment type="interaction">
    <interactant intactId="EBI-3870390">
        <id>P06850</id>
    </interactant>
    <interactant intactId="EBI-3867333">
        <id>A8MQ03</id>
        <label>CYSRT1</label>
    </interactant>
    <organismsDiffer>false</organismsDiffer>
    <experiments>3</experiments>
</comment>
<comment type="interaction">
    <interactant intactId="EBI-3870390">
        <id>P06850</id>
    </interactant>
    <interactant intactId="EBI-948001">
        <id>Q15323</id>
        <label>KRT31</label>
    </interactant>
    <organismsDiffer>false</organismsDiffer>
    <experiments>3</experiments>
</comment>
<comment type="interaction">
    <interactant intactId="EBI-3870390">
        <id>P06850</id>
    </interactant>
    <interactant intactId="EBI-11749135">
        <id>Q8IUG1</id>
        <label>KRTAP1-3</label>
    </interactant>
    <organismsDiffer>false</organismsDiffer>
    <experiments>3</experiments>
</comment>
<comment type="interaction">
    <interactant intactId="EBI-3870390">
        <id>P06850</id>
    </interactant>
    <interactant intactId="EBI-11741292">
        <id>Q9BYS1</id>
        <label>KRTAP1-5</label>
    </interactant>
    <organismsDiffer>false</organismsDiffer>
    <experiments>3</experiments>
</comment>
<comment type="interaction">
    <interactant intactId="EBI-3870390">
        <id>P06850</id>
    </interactant>
    <interactant intactId="EBI-10171774">
        <id>P60410</id>
        <label>KRTAP10-8</label>
    </interactant>
    <organismsDiffer>false</organismsDiffer>
    <experiments>3</experiments>
</comment>
<comment type="interaction">
    <interactant intactId="EBI-3870390">
        <id>P06850</id>
    </interactant>
    <interactant intactId="EBI-3958099">
        <id>P26371</id>
        <label>KRTAP5-9</label>
    </interactant>
    <organismsDiffer>false</organismsDiffer>
    <experiments>3</experiments>
</comment>
<comment type="interaction">
    <interactant intactId="EBI-3870390">
        <id>P06850</id>
    </interactant>
    <interactant intactId="EBI-1043191">
        <id>Q9BYQ3</id>
        <label>KRTAP9-3</label>
    </interactant>
    <organismsDiffer>false</organismsDiffer>
    <experiments>3</experiments>
</comment>
<comment type="interaction">
    <interactant intactId="EBI-3870390">
        <id>P06850</id>
    </interactant>
    <interactant intactId="EBI-724076">
        <id>Q99750</id>
        <label>MDFI</label>
    </interactant>
    <organismsDiffer>false</organismsDiffer>
    <experiments>3</experiments>
</comment>
<comment type="interaction">
    <interactant intactId="EBI-3870390">
        <id>P06850</id>
    </interactant>
    <interactant intactId="EBI-22310682">
        <id>P0DPK4</id>
        <label>NOTCH2NLC</label>
    </interactant>
    <organismsDiffer>false</organismsDiffer>
    <experiments>3</experiments>
</comment>
<comment type="interaction">
    <interactant intactId="EBI-3870390">
        <id>P06850</id>
    </interactant>
    <interactant intactId="EBI-711736">
        <id>Q8IWV7</id>
        <label>UBR1</label>
    </interactant>
    <organismsDiffer>false</organismsDiffer>
    <experiments>2</experiments>
</comment>
<comment type="subcellular location">
    <subcellularLocation>
        <location evidence="1">Secreted</location>
    </subcellularLocation>
</comment>
<comment type="tissue specificity">
    <text evidence="6 7">Produced by the hypothalamus and placenta.</text>
</comment>
<comment type="similarity">
    <text evidence="9">Belongs to the sauvagine/corticotropin-releasing factor/urotensin I family.</text>
</comment>
<comment type="online information" name="Wikipedia">
    <link uri="https://en.wikipedia.org/wiki/Corticotropin-releasing_hormone"/>
    <text>Corticotropin-releasing hormone entry</text>
</comment>
<keyword id="KW-0002">3D-structure</keyword>
<keyword id="KW-0027">Amidation</keyword>
<keyword id="KW-0165">Cleavage on pair of basic residues</keyword>
<keyword id="KW-0903">Direct protein sequencing</keyword>
<keyword id="KW-0372">Hormone</keyword>
<keyword id="KW-1267">Proteomics identification</keyword>
<keyword id="KW-1185">Reference proteome</keyword>
<keyword id="KW-0964">Secreted</keyword>
<keyword id="KW-0732">Signal</keyword>
<accession>P06850</accession>
<accession>B3KQS4</accession>
<name>CRF_HUMAN</name>
<protein>
    <recommendedName>
        <fullName>Corticoliberin</fullName>
    </recommendedName>
    <alternativeName>
        <fullName>Corticotropin-releasing factor</fullName>
        <shortName>CRF</shortName>
    </alternativeName>
    <alternativeName>
        <fullName>Corticotropin-releasing hormone</fullName>
    </alternativeName>
</protein>
<evidence type="ECO:0000250" key="1">
    <source>
        <dbReference type="UniProtKB" id="P06296"/>
    </source>
</evidence>
<evidence type="ECO:0000250" key="2">
    <source>
        <dbReference type="UniProtKB" id="Q8CIT0"/>
    </source>
</evidence>
<evidence type="ECO:0000256" key="3">
    <source>
        <dbReference type="SAM" id="MobiDB-lite"/>
    </source>
</evidence>
<evidence type="ECO:0000269" key="4">
    <source>
    </source>
</evidence>
<evidence type="ECO:0000269" key="5">
    <source>
    </source>
</evidence>
<evidence type="ECO:0000269" key="6">
    <source>
    </source>
</evidence>
<evidence type="ECO:0000269" key="7">
    <source>
    </source>
</evidence>
<evidence type="ECO:0000269" key="8">
    <source>
    </source>
</evidence>
<evidence type="ECO:0000305" key="9"/>
<evidence type="ECO:0007829" key="10">
    <source>
        <dbReference type="PDB" id="3EHU"/>
    </source>
</evidence>
<evidence type="ECO:0007829" key="11">
    <source>
        <dbReference type="PDB" id="6P9X"/>
    </source>
</evidence>